<accession>Q9C512</accession>
<accession>Q2V4H4</accession>
<keyword id="KW-0025">Alternative splicing</keyword>
<keyword id="KW-0106">Calcium</keyword>
<keyword id="KW-0175">Coiled coil</keyword>
<keyword id="KW-1015">Disulfide bond</keyword>
<keyword id="KW-0325">Glycoprotein</keyword>
<keyword id="KW-0333">Golgi apparatus</keyword>
<keyword id="KW-0378">Hydrolase</keyword>
<keyword id="KW-0460">Magnesium</keyword>
<keyword id="KW-0464">Manganese</keyword>
<keyword id="KW-0472">Membrane</keyword>
<keyword id="KW-0479">Metal-binding</keyword>
<keyword id="KW-1185">Reference proteome</keyword>
<keyword id="KW-0735">Signal-anchor</keyword>
<keyword id="KW-0812">Transmembrane</keyword>
<keyword id="KW-1133">Transmembrane helix</keyword>
<dbReference type="EC" id="3.2.1.113" evidence="5"/>
<dbReference type="EC" id="3.2.1.209" evidence="5"/>
<dbReference type="EMBL" id="AC024261">
    <property type="protein sequence ID" value="AAG52623.1"/>
    <property type="molecule type" value="Genomic_DNA"/>
</dbReference>
<dbReference type="EMBL" id="AC025294">
    <property type="protein sequence ID" value="AAG50876.1"/>
    <property type="molecule type" value="Genomic_DNA"/>
</dbReference>
<dbReference type="EMBL" id="CP002684">
    <property type="protein sequence ID" value="AEE32686.1"/>
    <property type="molecule type" value="Genomic_DNA"/>
</dbReference>
<dbReference type="EMBL" id="CP002684">
    <property type="protein sequence ID" value="AEE32687.1"/>
    <property type="molecule type" value="Genomic_DNA"/>
</dbReference>
<dbReference type="EMBL" id="AY081353">
    <property type="protein sequence ID" value="AAL91242.1"/>
    <property type="molecule type" value="mRNA"/>
</dbReference>
<dbReference type="EMBL" id="AY128845">
    <property type="protein sequence ID" value="AAM91245.1"/>
    <property type="molecule type" value="mRNA"/>
</dbReference>
<dbReference type="PIR" id="E96554">
    <property type="entry name" value="E96554"/>
</dbReference>
<dbReference type="RefSeq" id="NP_001031171.1">
    <molecule id="Q9C512-2"/>
    <property type="nucleotide sequence ID" value="NM_001036094.1"/>
</dbReference>
<dbReference type="RefSeq" id="NP_175570.1">
    <molecule id="Q9C512-1"/>
    <property type="nucleotide sequence ID" value="NM_104037.4"/>
</dbReference>
<dbReference type="SMR" id="Q9C512"/>
<dbReference type="BioGRID" id="26809">
    <property type="interactions" value="2"/>
</dbReference>
<dbReference type="FunCoup" id="Q9C512">
    <property type="interactions" value="2816"/>
</dbReference>
<dbReference type="STRING" id="3702.Q9C512"/>
<dbReference type="CAZy" id="GH47">
    <property type="family name" value="Glycoside Hydrolase Family 47"/>
</dbReference>
<dbReference type="GlyCosmos" id="Q9C512">
    <property type="glycosylation" value="2 sites, No reported glycans"/>
</dbReference>
<dbReference type="GlyGen" id="Q9C512">
    <property type="glycosylation" value="2 sites"/>
</dbReference>
<dbReference type="iPTMnet" id="Q9C512"/>
<dbReference type="PaxDb" id="3702-AT1G51590.1"/>
<dbReference type="ProteomicsDB" id="251344">
    <molecule id="Q9C512-1"/>
</dbReference>
<dbReference type="EnsemblPlants" id="AT1G51590.1">
    <molecule id="Q9C512-1"/>
    <property type="protein sequence ID" value="AT1G51590.1"/>
    <property type="gene ID" value="AT1G51590"/>
</dbReference>
<dbReference type="EnsemblPlants" id="AT1G51590.2">
    <molecule id="Q9C512-2"/>
    <property type="protein sequence ID" value="AT1G51590.2"/>
    <property type="gene ID" value="AT1G51590"/>
</dbReference>
<dbReference type="GeneID" id="841584"/>
<dbReference type="Gramene" id="AT1G51590.1">
    <molecule id="Q9C512-1"/>
    <property type="protein sequence ID" value="AT1G51590.1"/>
    <property type="gene ID" value="AT1G51590"/>
</dbReference>
<dbReference type="Gramene" id="AT1G51590.2">
    <molecule id="Q9C512-2"/>
    <property type="protein sequence ID" value="AT1G51590.2"/>
    <property type="gene ID" value="AT1G51590"/>
</dbReference>
<dbReference type="KEGG" id="ath:AT1G51590"/>
<dbReference type="Araport" id="AT1G51590"/>
<dbReference type="TAIR" id="AT1G51590">
    <property type="gene designation" value="MNS1"/>
</dbReference>
<dbReference type="eggNOG" id="KOG2204">
    <property type="taxonomic scope" value="Eukaryota"/>
</dbReference>
<dbReference type="InParanoid" id="Q9C512"/>
<dbReference type="OMA" id="NICFACL"/>
<dbReference type="OrthoDB" id="8118055at2759"/>
<dbReference type="PhylomeDB" id="Q9C512"/>
<dbReference type="BioCyc" id="ARA:AT1G51590-MONOMER"/>
<dbReference type="BRENDA" id="3.2.1.113">
    <property type="organism ID" value="399"/>
</dbReference>
<dbReference type="UniPathway" id="UPA00378"/>
<dbReference type="PRO" id="PR:Q9C512"/>
<dbReference type="Proteomes" id="UP000006548">
    <property type="component" value="Chromosome 1"/>
</dbReference>
<dbReference type="ExpressionAtlas" id="Q9C512">
    <property type="expression patterns" value="baseline and differential"/>
</dbReference>
<dbReference type="GO" id="GO:0005768">
    <property type="term" value="C:endosome"/>
    <property type="evidence" value="ECO:0007005"/>
    <property type="project" value="TAIR"/>
</dbReference>
<dbReference type="GO" id="GO:0005794">
    <property type="term" value="C:Golgi apparatus"/>
    <property type="evidence" value="ECO:0000314"/>
    <property type="project" value="TAIR"/>
</dbReference>
<dbReference type="GO" id="GO:0000137">
    <property type="term" value="C:Golgi cis cisterna"/>
    <property type="evidence" value="ECO:0007005"/>
    <property type="project" value="TAIR"/>
</dbReference>
<dbReference type="GO" id="GO:0000139">
    <property type="term" value="C:Golgi membrane"/>
    <property type="evidence" value="ECO:0007669"/>
    <property type="project" value="UniProtKB-SubCell"/>
</dbReference>
<dbReference type="GO" id="GO:0005802">
    <property type="term" value="C:trans-Golgi network"/>
    <property type="evidence" value="ECO:0007005"/>
    <property type="project" value="TAIR"/>
</dbReference>
<dbReference type="GO" id="GO:0004559">
    <property type="term" value="F:alpha-mannosidase activity"/>
    <property type="evidence" value="ECO:0000314"/>
    <property type="project" value="TAIR"/>
</dbReference>
<dbReference type="GO" id="GO:0005509">
    <property type="term" value="F:calcium ion binding"/>
    <property type="evidence" value="ECO:0007669"/>
    <property type="project" value="InterPro"/>
</dbReference>
<dbReference type="GO" id="GO:0004571">
    <property type="term" value="F:mannosyl-oligosaccharide 1,2-alpha-mannosidase activity"/>
    <property type="evidence" value="ECO:0007669"/>
    <property type="project" value="UniProtKB-EC"/>
</dbReference>
<dbReference type="GO" id="GO:0005975">
    <property type="term" value="P:carbohydrate metabolic process"/>
    <property type="evidence" value="ECO:0007669"/>
    <property type="project" value="InterPro"/>
</dbReference>
<dbReference type="GO" id="GO:0006491">
    <property type="term" value="P:N-glycan processing"/>
    <property type="evidence" value="ECO:0000315"/>
    <property type="project" value="TAIR"/>
</dbReference>
<dbReference type="GO" id="GO:0006486">
    <property type="term" value="P:protein glycosylation"/>
    <property type="evidence" value="ECO:0007669"/>
    <property type="project" value="UniProtKB-UniPathway"/>
</dbReference>
<dbReference type="FunFam" id="1.50.10.10:FF:000024">
    <property type="entry name" value="alpha-1,2-Mannosidase"/>
    <property type="match status" value="1"/>
</dbReference>
<dbReference type="Gene3D" id="1.50.10.10">
    <property type="match status" value="1"/>
</dbReference>
<dbReference type="InterPro" id="IPR012341">
    <property type="entry name" value="6hp_glycosidase-like_sf"/>
</dbReference>
<dbReference type="InterPro" id="IPR001382">
    <property type="entry name" value="Glyco_hydro_47"/>
</dbReference>
<dbReference type="InterPro" id="IPR050749">
    <property type="entry name" value="Glycosyl_Hydrolase_47"/>
</dbReference>
<dbReference type="InterPro" id="IPR036026">
    <property type="entry name" value="Seven-hairpin_glycosidases"/>
</dbReference>
<dbReference type="PANTHER" id="PTHR11742:SF6">
    <property type="entry name" value="MANNOSYL-OLIGOSACCHARIDE ALPHA-1,2-MANNOSIDASE IA-RELATED"/>
    <property type="match status" value="1"/>
</dbReference>
<dbReference type="PANTHER" id="PTHR11742">
    <property type="entry name" value="MANNOSYL-OLIGOSACCHARIDE ALPHA-1,2-MANNOSIDASE-RELATED"/>
    <property type="match status" value="1"/>
</dbReference>
<dbReference type="Pfam" id="PF01532">
    <property type="entry name" value="Glyco_hydro_47"/>
    <property type="match status" value="1"/>
</dbReference>
<dbReference type="PRINTS" id="PR00747">
    <property type="entry name" value="GLYHDRLASE47"/>
</dbReference>
<dbReference type="SUPFAM" id="SSF48225">
    <property type="entry name" value="Seven-hairpin glycosidases"/>
    <property type="match status" value="1"/>
</dbReference>
<feature type="chain" id="PRO_0000397933" description="Mannosyl-oligosaccharide 1,2-alpha-mannosidase MNS1">
    <location>
        <begin position="1"/>
        <end position="560"/>
    </location>
</feature>
<feature type="topological domain" description="Cytoplasmic" evidence="4">
    <location>
        <begin position="1"/>
        <end position="27"/>
    </location>
</feature>
<feature type="transmembrane region" description="Helical; Signal-anchor for type II membrane protein" evidence="4">
    <location>
        <begin position="28"/>
        <end position="47"/>
    </location>
</feature>
<feature type="topological domain" description="Lumenal" evidence="4">
    <location>
        <begin position="48"/>
        <end position="560"/>
    </location>
</feature>
<feature type="coiled-coil region" evidence="4">
    <location>
        <begin position="47"/>
        <end position="80"/>
    </location>
</feature>
<feature type="active site" description="Proton donor" evidence="1">
    <location>
        <position position="179"/>
    </location>
</feature>
<feature type="active site" evidence="1">
    <location>
        <position position="312"/>
    </location>
</feature>
<feature type="active site" description="Proton donor" evidence="2">
    <location>
        <position position="423"/>
    </location>
</feature>
<feature type="active site" evidence="1">
    <location>
        <position position="445"/>
    </location>
</feature>
<feature type="binding site" evidence="3">
    <location>
        <position position="529"/>
    </location>
    <ligand>
        <name>Ca(2+)</name>
        <dbReference type="ChEBI" id="CHEBI:29108"/>
    </ligand>
</feature>
<feature type="glycosylation site" description="N-linked (GlcNAc...) asparagine" evidence="4">
    <location>
        <position position="326"/>
    </location>
</feature>
<feature type="glycosylation site" description="N-linked (GlcNAc...) asparagine" evidence="4">
    <location>
        <position position="459"/>
    </location>
</feature>
<feature type="disulfide bond" evidence="3">
    <location>
        <begin position="377"/>
        <end position="409"/>
    </location>
</feature>
<feature type="splice variant" id="VSP_039724" description="In isoform 2." evidence="7">
    <location>
        <begin position="1"/>
        <end position="104"/>
    </location>
</feature>
<sequence length="560" mass="63532">MARSRSISGYGIWKYLNPAYYLRRPRRLALLFIVFVSVSMLVWDRINLAREHEVEVFKLNEEVSRLEQMLEELNGGVGNKPLKTLKDAPEDPVDKQRRQKVKEAMIHAWSSYEKYAWGKDELQPRTKDGTDSFGGLGATMVDSLDTLYIMGLDEQFQKAREWVASSLDFDKDYDASMFETTIRVVGGLLSAYDLSGDKMFLEKAKDIADRLLPAWNTPTGIPYNIINLRNGNAHNPSWAAGGDSILADSGTEQLEFIALSQRTGDPKYQQKVEKVITELNKNFPADGLLPIYINPDNANPSYSTTTFGAMGDSFYEYLLKVWVQGNKTSAVKPYRDMWEKSMKGLLSLVKKSTPSSFTYICEKNGNNLIDKMDELACFAPGMLALGASGYGPDEEKKFLSLAGELAWTCYNFYQSTPTKLAGENYFFTAGQDMSVGTSWNILRPETVESLFYLWRLTGNKTYQEWGWNIFQAFEKNSRVESGYVGLKDVNTGAKDNKMQSFFLAETLKYLYLLFSPSSVISLDEWVFNTEAHPLKIVARNDPRKPTIALRQRKFGHQINV</sequence>
<name>MNS1_ARATH</name>
<proteinExistence type="evidence at protein level"/>
<comment type="function">
    <text evidence="5 6">Class I alpha-mannosidase essential for early N-glycan processing. Progressively trims alpha-1,2-linked mannose residues. Produces Man(5)GlcNAc(2) from Man(8)GlcNAc(2), but only Man(6)GlcNAc(2) from Man(9)GlcNAc(2). Has difficulty acting on the terminal mannose of the b-branch. Involved in root development and cell wall biosynthesis.</text>
</comment>
<comment type="catalytic activity">
    <reaction evidence="5">
        <text>N(4)-(alpha-D-Man-(1-&gt;2)-alpha-D-Man-(1-&gt;2)-alpha-D-Man-(1-&gt;3)-[alpha-D-Man-(1-&gt;2)-alpha-D-Man-(1-&gt;3)-[alpha-D-Man-(1-&gt;2)-alpha-D-Man-(1-&gt;6)]-alpha-D-Man-(1-&gt;6)]-beta-D-Man-(1-&gt;4)-beta-D-GlcNAc-(1-&gt;4)-beta-D-GlcNAc)-L-asparaginyl-[protein] (N-glucan mannose isomer 9A1,2,3B1,2,3) + 4 H2O = N(4)-(alpha-D-Man-(1-&gt;3)-[alpha-D-Man-(1-&gt;3)-[alpha-D-Man-(1-&gt;6)]-alpha-D-Man-(1-&gt;6)]-beta-D-Man-(1-&gt;4)-beta-D-GlcNAc-(1-&gt;4)-beta-D-GlcNAc)-L-asparaginyl-[protein] (N-glucan mannose isomer 5A1,2) + 4 beta-D-mannose</text>
        <dbReference type="Rhea" id="RHEA:56008"/>
        <dbReference type="Rhea" id="RHEA-COMP:14356"/>
        <dbReference type="Rhea" id="RHEA-COMP:14367"/>
        <dbReference type="ChEBI" id="CHEBI:15377"/>
        <dbReference type="ChEBI" id="CHEBI:28563"/>
        <dbReference type="ChEBI" id="CHEBI:59087"/>
        <dbReference type="ChEBI" id="CHEBI:139493"/>
        <dbReference type="EC" id="3.2.1.113"/>
    </reaction>
</comment>
<comment type="catalytic activity">
    <reaction evidence="5">
        <text>N(4)-(alpha-D-Man-(1-&gt;2)-alpha-D-Man-(1-&gt;2)-alpha-D-Man-(1-&gt;3)-[alpha-D-Man-(1-&gt;3)-[alpha-D-Man-(1-&gt;2)-alpha-D-Man-(1-&gt;6)]-alpha-D-Man-(1-&gt;6)]-beta-D-Man-(1-&gt;4)-beta-D-GlcNAc-(1-&gt;4)-beta-D-GlcNAc)-L-asparaginyl-[protein] (N-glucan mannose isomer 8A1,2,3B1,3) + 3 H2O = N(4)-(alpha-D-Man-(1-&gt;3)-[alpha-D-Man-(1-&gt;3)-[alpha-D-Man-(1-&gt;6)]-alpha-D-Man-(1-&gt;6)]-beta-D-Man-(1-&gt;4)-beta-D-GlcNAc-(1-&gt;4)-beta-D-GlcNAc)-L-asparaginyl-[protein] (N-glucan mannose isomer 5A1,2) + 3 beta-D-mannose</text>
        <dbReference type="Rhea" id="RHEA:56028"/>
        <dbReference type="Rhea" id="RHEA-COMP:14358"/>
        <dbReference type="Rhea" id="RHEA-COMP:14367"/>
        <dbReference type="ChEBI" id="CHEBI:15377"/>
        <dbReference type="ChEBI" id="CHEBI:28563"/>
        <dbReference type="ChEBI" id="CHEBI:59087"/>
        <dbReference type="ChEBI" id="CHEBI:60628"/>
        <dbReference type="EC" id="3.2.1.113"/>
    </reaction>
</comment>
<comment type="catalytic activity">
    <reaction evidence="5">
        <text>N(4)-(alpha-D-Man-(1-&gt;2)-alpha-D-Man-(1-&gt;2)-alpha-D-Man-(1-&gt;3)-[alpha-D-Man-(1-&gt;2)-alpha-D-Man-(1-&gt;3)-[alpha-D-Man-(1-&gt;2)-alpha-D-Man-(1-&gt;6)]-alpha-D-Man-(1-&gt;6)]-beta-D-Man-(1-&gt;4)-beta-D-GlcNAc-(1-&gt;4)-beta-D-GlcNAc)-L-asparaginyl-[protein] (N-glucan mannose isomer 9A1,2,3B1,2,3) + H2O = N(4)-(alpha-D-Man-(1-&gt;2)-alpha-D-Man-(1-&gt;2)-alpha-D-Man-(1-&gt;3)-[alpha-D-Man-(1-&gt;3)-[alpha-D-Man-(1-&gt;2)-alpha-D-Man-(1-&gt;6)]-alpha-D-Man-(1-&gt;6)]-beta-D-Man-(1-&gt;4)-beta-D-GlcNAc-(1-&gt;4)-beta-D-GlcNAc)-L-asparaginyl-[protein] (N-glucan mannose isomer 8A1,2,3B1,3) + beta-D-mannose</text>
        <dbReference type="Rhea" id="RHEA:56004"/>
        <dbReference type="Rhea" id="RHEA-COMP:14356"/>
        <dbReference type="Rhea" id="RHEA-COMP:14358"/>
        <dbReference type="ChEBI" id="CHEBI:15377"/>
        <dbReference type="ChEBI" id="CHEBI:28563"/>
        <dbReference type="ChEBI" id="CHEBI:60628"/>
        <dbReference type="ChEBI" id="CHEBI:139493"/>
        <dbReference type="EC" id="3.2.1.209"/>
    </reaction>
</comment>
<comment type="cofactor">
    <cofactor evidence="6">
        <name>Ca(2+)</name>
        <dbReference type="ChEBI" id="CHEBI:29108"/>
    </cofactor>
    <cofactor evidence="6">
        <name>Mn(2+)</name>
        <dbReference type="ChEBI" id="CHEBI:29035"/>
    </cofactor>
    <cofactor evidence="6">
        <name>Mg(2+)</name>
        <dbReference type="ChEBI" id="CHEBI:18420"/>
    </cofactor>
    <text evidence="6">Ca(2+) or Mn(2+). Mg(2+) can be used to a lesser extent.</text>
</comment>
<comment type="activity regulation">
    <text evidence="5 6">Inhibited by kifunensine and 1-deoxymannojirimycin, but not by swainsonine.</text>
</comment>
<comment type="biophysicochemical properties">
    <phDependence>
        <text evidence="5">Optimum pH is 6.0. Stable from pH 4.5 to 6.5.</text>
    </phDependence>
    <temperatureDependence>
        <text evidence="5">Optimum temperature is 25 degrees Celsius.</text>
    </temperatureDependence>
</comment>
<comment type="pathway">
    <text evidence="7">Protein modification; protein glycosylation.</text>
</comment>
<comment type="subcellular location">
    <subcellularLocation>
        <location evidence="5 6">Golgi apparatus membrane</location>
        <topology evidence="5 6">Single-pass type II membrane protein</topology>
    </subcellularLocation>
</comment>
<comment type="alternative products">
    <event type="alternative splicing"/>
    <isoform>
        <id>Q9C512-1</id>
        <name>1</name>
        <sequence type="displayed"/>
    </isoform>
    <isoform>
        <id>Q9C512-2</id>
        <name>2</name>
        <sequence type="described" ref="VSP_039724"/>
    </isoform>
</comment>
<comment type="tissue specificity">
    <text evidence="5 6">Expressed in flowers, siliques, stems, leaves, roots, pollen grains, shoot apical meristems, hypocotyls and upper region of the root.</text>
</comment>
<comment type="disruption phenotype">
    <text evidence="5 6">No visible phenotype; due the redundancy with MNS2. Lack of complex N-glycans, shorter roots and increased lateral root formation in mns1 and mns2 double mutants.</text>
</comment>
<comment type="similarity">
    <text evidence="7">Belongs to the glycosyl hydrolase 47 family.</text>
</comment>
<organism>
    <name type="scientific">Arabidopsis thaliana</name>
    <name type="common">Mouse-ear cress</name>
    <dbReference type="NCBI Taxonomy" id="3702"/>
    <lineage>
        <taxon>Eukaryota</taxon>
        <taxon>Viridiplantae</taxon>
        <taxon>Streptophyta</taxon>
        <taxon>Embryophyta</taxon>
        <taxon>Tracheophyta</taxon>
        <taxon>Spermatophyta</taxon>
        <taxon>Magnoliopsida</taxon>
        <taxon>eudicotyledons</taxon>
        <taxon>Gunneridae</taxon>
        <taxon>Pentapetalae</taxon>
        <taxon>rosids</taxon>
        <taxon>malvids</taxon>
        <taxon>Brassicales</taxon>
        <taxon>Brassicaceae</taxon>
        <taxon>Camelineae</taxon>
        <taxon>Arabidopsis</taxon>
    </lineage>
</organism>
<reference key="1">
    <citation type="journal article" date="2000" name="Nature">
        <title>Sequence and analysis of chromosome 1 of the plant Arabidopsis thaliana.</title>
        <authorList>
            <person name="Theologis A."/>
            <person name="Ecker J.R."/>
            <person name="Palm C.J."/>
            <person name="Federspiel N.A."/>
            <person name="Kaul S."/>
            <person name="White O."/>
            <person name="Alonso J."/>
            <person name="Altafi H."/>
            <person name="Araujo R."/>
            <person name="Bowman C.L."/>
            <person name="Brooks S.Y."/>
            <person name="Buehler E."/>
            <person name="Chan A."/>
            <person name="Chao Q."/>
            <person name="Chen H."/>
            <person name="Cheuk R.F."/>
            <person name="Chin C.W."/>
            <person name="Chung M.K."/>
            <person name="Conn L."/>
            <person name="Conway A.B."/>
            <person name="Conway A.R."/>
            <person name="Creasy T.H."/>
            <person name="Dewar K."/>
            <person name="Dunn P."/>
            <person name="Etgu P."/>
            <person name="Feldblyum T.V."/>
            <person name="Feng J.-D."/>
            <person name="Fong B."/>
            <person name="Fujii C.Y."/>
            <person name="Gill J.E."/>
            <person name="Goldsmith A.D."/>
            <person name="Haas B."/>
            <person name="Hansen N.F."/>
            <person name="Hughes B."/>
            <person name="Huizar L."/>
            <person name="Hunter J.L."/>
            <person name="Jenkins J."/>
            <person name="Johnson-Hopson C."/>
            <person name="Khan S."/>
            <person name="Khaykin E."/>
            <person name="Kim C.J."/>
            <person name="Koo H.L."/>
            <person name="Kremenetskaia I."/>
            <person name="Kurtz D.B."/>
            <person name="Kwan A."/>
            <person name="Lam B."/>
            <person name="Langin-Hooper S."/>
            <person name="Lee A."/>
            <person name="Lee J.M."/>
            <person name="Lenz C.A."/>
            <person name="Li J.H."/>
            <person name="Li Y.-P."/>
            <person name="Lin X."/>
            <person name="Liu S.X."/>
            <person name="Liu Z.A."/>
            <person name="Luros J.S."/>
            <person name="Maiti R."/>
            <person name="Marziali A."/>
            <person name="Militscher J."/>
            <person name="Miranda M."/>
            <person name="Nguyen M."/>
            <person name="Nierman W.C."/>
            <person name="Osborne B.I."/>
            <person name="Pai G."/>
            <person name="Peterson J."/>
            <person name="Pham P.K."/>
            <person name="Rizzo M."/>
            <person name="Rooney T."/>
            <person name="Rowley D."/>
            <person name="Sakano H."/>
            <person name="Salzberg S.L."/>
            <person name="Schwartz J.R."/>
            <person name="Shinn P."/>
            <person name="Southwick A.M."/>
            <person name="Sun H."/>
            <person name="Tallon L.J."/>
            <person name="Tambunga G."/>
            <person name="Toriumi M.J."/>
            <person name="Town C.D."/>
            <person name="Utterback T."/>
            <person name="Van Aken S."/>
            <person name="Vaysberg M."/>
            <person name="Vysotskaia V.S."/>
            <person name="Walker M."/>
            <person name="Wu D."/>
            <person name="Yu G."/>
            <person name="Fraser C.M."/>
            <person name="Venter J.C."/>
            <person name="Davis R.W."/>
        </authorList>
    </citation>
    <scope>NUCLEOTIDE SEQUENCE [LARGE SCALE GENOMIC DNA]</scope>
    <source>
        <strain>cv. Columbia</strain>
    </source>
</reference>
<reference key="2">
    <citation type="journal article" date="2017" name="Plant J.">
        <title>Araport11: a complete reannotation of the Arabidopsis thaliana reference genome.</title>
        <authorList>
            <person name="Cheng C.Y."/>
            <person name="Krishnakumar V."/>
            <person name="Chan A.P."/>
            <person name="Thibaud-Nissen F."/>
            <person name="Schobel S."/>
            <person name="Town C.D."/>
        </authorList>
    </citation>
    <scope>GENOME REANNOTATION</scope>
    <source>
        <strain>cv. Columbia</strain>
    </source>
</reference>
<reference key="3">
    <citation type="journal article" date="2003" name="Science">
        <title>Empirical analysis of transcriptional activity in the Arabidopsis genome.</title>
        <authorList>
            <person name="Yamada K."/>
            <person name="Lim J."/>
            <person name="Dale J.M."/>
            <person name="Chen H."/>
            <person name="Shinn P."/>
            <person name="Palm C.J."/>
            <person name="Southwick A.M."/>
            <person name="Wu H.C."/>
            <person name="Kim C.J."/>
            <person name="Nguyen M."/>
            <person name="Pham P.K."/>
            <person name="Cheuk R.F."/>
            <person name="Karlin-Newmann G."/>
            <person name="Liu S.X."/>
            <person name="Lam B."/>
            <person name="Sakano H."/>
            <person name="Wu T."/>
            <person name="Yu G."/>
            <person name="Miranda M."/>
            <person name="Quach H.L."/>
            <person name="Tripp M."/>
            <person name="Chang C.H."/>
            <person name="Lee J.M."/>
            <person name="Toriumi M.J."/>
            <person name="Chan M.M."/>
            <person name="Tang C.C."/>
            <person name="Onodera C.S."/>
            <person name="Deng J.M."/>
            <person name="Akiyama K."/>
            <person name="Ansari Y."/>
            <person name="Arakawa T."/>
            <person name="Banh J."/>
            <person name="Banno F."/>
            <person name="Bowser L."/>
            <person name="Brooks S.Y."/>
            <person name="Carninci P."/>
            <person name="Chao Q."/>
            <person name="Choy N."/>
            <person name="Enju A."/>
            <person name="Goldsmith A.D."/>
            <person name="Gurjal M."/>
            <person name="Hansen N.F."/>
            <person name="Hayashizaki Y."/>
            <person name="Johnson-Hopson C."/>
            <person name="Hsuan V.W."/>
            <person name="Iida K."/>
            <person name="Karnes M."/>
            <person name="Khan S."/>
            <person name="Koesema E."/>
            <person name="Ishida J."/>
            <person name="Jiang P.X."/>
            <person name="Jones T."/>
            <person name="Kawai J."/>
            <person name="Kamiya A."/>
            <person name="Meyers C."/>
            <person name="Nakajima M."/>
            <person name="Narusaka M."/>
            <person name="Seki M."/>
            <person name="Sakurai T."/>
            <person name="Satou M."/>
            <person name="Tamse R."/>
            <person name="Vaysberg M."/>
            <person name="Wallender E.K."/>
            <person name="Wong C."/>
            <person name="Yamamura Y."/>
            <person name="Yuan S."/>
            <person name="Shinozaki K."/>
            <person name="Davis R.W."/>
            <person name="Theologis A."/>
            <person name="Ecker J.R."/>
        </authorList>
    </citation>
    <scope>NUCLEOTIDE SEQUENCE [LARGE SCALE MRNA]</scope>
    <source>
        <strain>cv. Columbia</strain>
    </source>
</reference>
<reference key="4">
    <citation type="journal article" date="2009" name="Plant Cell">
        <title>Class I alpha-mannosidases are required for N-glycan processing and root development in Arabidopsis thaliana.</title>
        <authorList>
            <person name="Liebminger E."/>
            <person name="Huttner S."/>
            <person name="Vavra U."/>
            <person name="Fischl R."/>
            <person name="Schoberer J."/>
            <person name="Grass J."/>
            <person name="Blaukopf C."/>
            <person name="Seifert G.J."/>
            <person name="Altmann F."/>
            <person name="Mach L."/>
            <person name="Strasser R."/>
        </authorList>
    </citation>
    <scope>FUNCTION</scope>
    <scope>TISSUE SPECIFICITY</scope>
    <scope>SUBCELLULAR LOCATION</scope>
    <scope>ACTIVITY REGULATION</scope>
    <scope>DISRUPTION PHENOTYPE</scope>
    <scope>COFACTOR</scope>
</reference>
<reference key="5">
    <citation type="journal article" date="2010" name="Glycobiology">
        <title>Two Arabidopsis thaliana Golgi alpha-mannosidase I enzymes are responsible for plant N-glycan maturation.</title>
        <authorList>
            <person name="Kajiura H."/>
            <person name="Koiwa H."/>
            <person name="Nakazawa Y."/>
            <person name="Okazawa A."/>
            <person name="Kobayashi A."/>
            <person name="Seki T."/>
            <person name="Fujiyama K."/>
        </authorList>
    </citation>
    <scope>FUNCTION</scope>
    <scope>CATALYTIC ACTIVITY</scope>
    <scope>ACTIVITY REGULATION</scope>
    <scope>TISSUE SPECIFICITY</scope>
    <scope>SUBCELLULAR LOCATION</scope>
    <scope>BIOPHYSICOCHEMICAL PROPERTIES</scope>
    <scope>DISRUPTION PHENOTYPE</scope>
</reference>
<evidence type="ECO:0000250" key="1"/>
<evidence type="ECO:0000250" key="2">
    <source>
        <dbReference type="UniProtKB" id="P31723"/>
    </source>
</evidence>
<evidence type="ECO:0000250" key="3">
    <source>
        <dbReference type="UniProtKB" id="P32906"/>
    </source>
</evidence>
<evidence type="ECO:0000255" key="4"/>
<evidence type="ECO:0000269" key="5">
    <source>
    </source>
</evidence>
<evidence type="ECO:0000269" key="6">
    <source>
    </source>
</evidence>
<evidence type="ECO:0000305" key="7"/>
<gene>
    <name type="primary">MNS1</name>
    <name type="synonym">MANIB</name>
    <name type="ordered locus">At1g51590</name>
    <name type="ORF">F19C24.18</name>
    <name type="ORF">F5D21.1</name>
</gene>
<protein>
    <recommendedName>
        <fullName>Mannosyl-oligosaccharide 1,2-alpha-mannosidase MNS1</fullName>
        <shortName>AtMANIb</shortName>
        <ecNumber evidence="5">3.2.1.113</ecNumber>
        <ecNumber evidence="5">3.2.1.209</ecNumber>
    </recommendedName>
    <alternativeName>
        <fullName>Alpha-mannosidase IB</fullName>
    </alternativeName>
</protein>